<feature type="chain" id="PRO_0000079172" description="2-haloacid dehalogenase, configuration-inverting">
    <location>
        <begin position="1"/>
        <end position="307"/>
    </location>
</feature>
<feature type="mutagenesis site" description="60% activity of wild-type." evidence="1">
    <original>Y</original>
    <variation>F</variation>
    <location>
        <position position="26"/>
    </location>
</feature>
<feature type="mutagenesis site" description="Less than 10% activity." evidence="1">
    <original>D</original>
    <variation>N</variation>
    <location>
        <position position="28"/>
    </location>
</feature>
<feature type="mutagenesis site" description="Almost no effect." evidence="1">
    <original>R</original>
    <variation>A</variation>
    <location>
        <position position="34"/>
    </location>
</feature>
<feature type="mutagenesis site" description="40% activity of wild-type." evidence="1">
    <original>W</original>
    <variation>F</variation>
    <location>
        <position position="37"/>
    </location>
</feature>
<feature type="mutagenesis site" description="Almost no effect." evidence="1">
    <original>R</original>
    <variation>A</variation>
    <location>
        <position position="43"/>
    </location>
</feature>
<feature type="mutagenesis site" description="Complete loss of activity." evidence="1">
    <original>T</original>
    <variation>A</variation>
    <location>
        <position position="65"/>
    </location>
</feature>
<feature type="mutagenesis site" description="Complete loss of activity." evidence="1">
    <original>E</original>
    <variation>D</variation>
    <variation>N</variation>
    <variation>Q</variation>
    <location>
        <position position="69"/>
    </location>
</feature>
<feature type="mutagenesis site" description="50% activity of wild-type." evidence="1">
    <original>D</original>
    <variation>N</variation>
    <location>
        <position position="73"/>
    </location>
</feature>
<feature type="mutagenesis site" description="Almost no effect." evidence="1">
    <original>R</original>
    <variation>A</variation>
    <location>
        <position position="76"/>
    </location>
</feature>
<feature type="mutagenesis site" description="15% activity of wild-type." evidence="1">
    <original>E</original>
    <variation>Q</variation>
    <location>
        <position position="102"/>
    </location>
</feature>
<feature type="mutagenesis site" description="Almost no effect." evidence="1">
    <original>Y</original>
    <variation>F</variation>
    <location>
        <position position="115"/>
    </location>
</feature>
<feature type="mutagenesis site" description="Less than 10% activity." evidence="1">
    <original>N</original>
    <variation>D</variation>
    <location>
        <position position="117"/>
    </location>
</feature>
<feature type="mutagenesis site" description="Almost no effect." evidence="1">
    <original>K</original>
    <variation>R</variation>
    <location>
        <position position="119"/>
    </location>
</feature>
<feature type="mutagenesis site" description="Less than 10% activity." evidence="1">
    <original>Y</original>
    <variation>F</variation>
    <location>
        <position position="120"/>
    </location>
</feature>
<feature type="mutagenesis site" description="60% activity of wild-type." evidence="1">
    <original>S</original>
    <variation>A</variation>
    <location>
        <position position="125"/>
    </location>
</feature>
<feature type="mutagenesis site" description="No effect." evidence="1">
    <original>E</original>
    <variation>Q</variation>
    <location>
        <position position="129"/>
    </location>
</feature>
<feature type="mutagenesis site" description="50% activity of wild-type." evidence="1">
    <original>R</original>
    <variation>A</variation>
    <location>
        <position position="134"/>
    </location>
</feature>
<feature type="mutagenesis site" description="No effect." evidence="1">
    <original>E</original>
    <variation>Q</variation>
    <location>
        <position position="161"/>
    </location>
</feature>
<feature type="mutagenesis site" description="No effect." evidence="1">
    <original>D</original>
    <variation>N</variation>
    <location>
        <position position="167"/>
    </location>
</feature>
<feature type="mutagenesis site" description="No effect." evidence="1">
    <original>S</original>
    <variation>A</variation>
    <location>
        <position position="193"/>
    </location>
</feature>
<feature type="mutagenesis site" description="Complete loss of activity." evidence="1">
    <original>D</original>
    <variation>A</variation>
    <variation>E</variation>
    <variation>G</variation>
    <variation>N</variation>
    <variation>S</variation>
    <location>
        <position position="194"/>
    </location>
</feature>
<feature type="mutagenesis site" description="60% activity of wild-type." evidence="1">
    <original>W</original>
    <variation>F</variation>
    <location>
        <position position="201"/>
    </location>
</feature>
<feature type="mutagenesis site" description="Less than 10% activity." evidence="1">
    <original>T</original>
    <variation>A</variation>
    <location>
        <position position="219"/>
    </location>
</feature>
<feature type="mutagenesis site" description="Less than 10% activity." evidence="1">
    <original>D</original>
    <variation>N</variation>
    <location>
        <position position="250"/>
    </location>
</feature>
<feature type="mutagenesis site" description="Almost no effect." evidence="1">
    <original>T</original>
    <variation>A</variation>
    <location>
        <position position="256"/>
    </location>
</feature>
<feature type="mutagenesis site" description="Almost no effect." evidence="1">
    <original>N</original>
    <variation>D</variation>
    <location>
        <position position="271"/>
    </location>
</feature>
<evidence type="ECO:0000269" key="1">
    <source>
    </source>
</evidence>
<evidence type="ECO:0000305" key="2"/>
<sequence>MSHRPILKNFPQVDHHQASGKLGDLYNDIHDTLRVPWVAFGIRVMSQFEHFVPAAWEALKPQISTRYAEEGADKVREAAIIPGSAPANPTPALLANGWSEEEIAKLKATLDGLNYGNPKYLILISAWNEAWHGRDAGGGAGKRLDSVQSERLPYGLPQGVEKFHLIDPEAADDQVQCLLRDIRDAFLHHGPASDYRVLAAWPDYLEIAFRDTLKPVALTTEFELTTSRIRKIAREHVRGFDGAGGVAWRDMADRMTPEEIAGLTGVLFMYNRFIADITVAIIRLKQAFGSAEDATENKFRVWPTEKG</sequence>
<protein>
    <recommendedName>
        <fullName>2-haloacid dehalogenase, configuration-inverting</fullName>
        <ecNumber>3.8.1.10</ecNumber>
    </recommendedName>
    <alternativeName>
        <fullName>DL-2-haloacid dehalogenase</fullName>
    </alternativeName>
    <alternativeName>
        <fullName>DL-DEXi</fullName>
    </alternativeName>
</protein>
<name>HADDL_PSES4</name>
<keyword id="KW-0378">Hydrolase</keyword>
<organism>
    <name type="scientific">Pseudomonas sp. (strain 113)</name>
    <dbReference type="NCBI Taxonomy" id="59918"/>
    <lineage>
        <taxon>Bacteria</taxon>
        <taxon>Pseudomonadati</taxon>
        <taxon>Pseudomonadota</taxon>
    </lineage>
</organism>
<reference key="1">
    <citation type="journal article" date="1997" name="J. Bacteriol.">
        <title>Bacterial DL-2-haloacid dehalogenase from Pseudomonas sp. strain 113: gene cloning and structural comparison with D- and L-2-haloacid dehalogenases.</title>
        <authorList>
            <person name="Nardi-Dei V."/>
            <person name="Kurihara T."/>
            <person name="Park C."/>
            <person name="Esaki N."/>
            <person name="Soda K."/>
        </authorList>
    </citation>
    <scope>NUCLEOTIDE SEQUENCE [GENOMIC DNA]</scope>
    <scope>MUTAGENESIS</scope>
</reference>
<accession>O06652</accession>
<comment type="function">
    <text>Dehalogenates both (S)- and (R)-2-haloalkanoic acids to the corresponding (R)- and (S)-hydroxyalkanoic acids, respectively, with inversion of configuration at C-2. Acts on 2-haloalkanoic acids whose carbon chain lengths are five or less.</text>
</comment>
<comment type="catalytic activity">
    <reaction>
        <text>an (S)-2-haloacid + H2O = a (2R)-2-hydroxycarboxylate + a halide anion + H(+)</text>
        <dbReference type="Rhea" id="RHEA:11192"/>
        <dbReference type="ChEBI" id="CHEBI:15377"/>
        <dbReference type="ChEBI" id="CHEBI:15378"/>
        <dbReference type="ChEBI" id="CHEBI:16042"/>
        <dbReference type="ChEBI" id="CHEBI:58314"/>
        <dbReference type="ChEBI" id="CHEBI:137405"/>
        <dbReference type="EC" id="3.8.1.10"/>
    </reaction>
</comment>
<comment type="catalytic activity">
    <reaction>
        <text>an (R)-2-haloacid + H2O = a (2S)-2-hydroxycarboxylate + a halide anion + H(+)</text>
        <dbReference type="Rhea" id="RHEA:22188"/>
        <dbReference type="ChEBI" id="CHEBI:15377"/>
        <dbReference type="ChEBI" id="CHEBI:15378"/>
        <dbReference type="ChEBI" id="CHEBI:16042"/>
        <dbReference type="ChEBI" id="CHEBI:58123"/>
        <dbReference type="ChEBI" id="CHEBI:137406"/>
        <dbReference type="EC" id="3.8.1.10"/>
    </reaction>
</comment>
<comment type="subunit">
    <text>Homodimer.</text>
</comment>
<comment type="similarity">
    <text evidence="2">Belongs to the HAD-like hydrolase superfamily. S-2-haloalkanoic acid dehalogenase family.</text>
</comment>
<proteinExistence type="evidence at protein level"/>
<dbReference type="EC" id="3.8.1.10"/>
<dbReference type="EMBL" id="U97030">
    <property type="protein sequence ID" value="AAB62819.1"/>
    <property type="molecule type" value="Genomic_DNA"/>
</dbReference>
<dbReference type="SMR" id="O06652"/>
<dbReference type="BRENDA" id="3.8.1.10">
    <property type="organism ID" value="5085"/>
</dbReference>
<dbReference type="GO" id="GO:0033975">
    <property type="term" value="F:(R)-2-haloacid dehalogenase activity"/>
    <property type="evidence" value="ECO:0007669"/>
    <property type="project" value="RHEA"/>
</dbReference>
<dbReference type="GO" id="GO:0018784">
    <property type="term" value="F:(S)-2-haloacid dehalogenase activity"/>
    <property type="evidence" value="ECO:0007669"/>
    <property type="project" value="RHEA"/>
</dbReference>
<dbReference type="GO" id="GO:0033976">
    <property type="term" value="F:2-haloacid dehalogenase (configuration-inverting) activity"/>
    <property type="evidence" value="ECO:0007669"/>
    <property type="project" value="UniProtKB-EC"/>
</dbReference>
<dbReference type="InterPro" id="IPR019714">
    <property type="entry name" value="2-haloacid_dehalogenase_DehI"/>
</dbReference>
<dbReference type="Pfam" id="PF10778">
    <property type="entry name" value="DehI"/>
    <property type="match status" value="1"/>
</dbReference>